<reference key="1">
    <citation type="submission" date="2007-10" db="EMBL/GenBank/DDBJ databases">
        <title>Complete sequence of Desulfococcus oleovorans Hxd3.</title>
        <authorList>
            <consortium name="US DOE Joint Genome Institute"/>
            <person name="Copeland A."/>
            <person name="Lucas S."/>
            <person name="Lapidus A."/>
            <person name="Barry K."/>
            <person name="Glavina del Rio T."/>
            <person name="Dalin E."/>
            <person name="Tice H."/>
            <person name="Pitluck S."/>
            <person name="Kiss H."/>
            <person name="Brettin T."/>
            <person name="Bruce D."/>
            <person name="Detter J.C."/>
            <person name="Han C."/>
            <person name="Schmutz J."/>
            <person name="Larimer F."/>
            <person name="Land M."/>
            <person name="Hauser L."/>
            <person name="Kyrpides N."/>
            <person name="Kim E."/>
            <person name="Wawrik B."/>
            <person name="Richardson P."/>
        </authorList>
    </citation>
    <scope>NUCLEOTIDE SEQUENCE [LARGE SCALE GENOMIC DNA]</scope>
    <source>
        <strain>DSM 6200 / JCM 39069 / Hxd3</strain>
    </source>
</reference>
<accession>A8ZV12</accession>
<proteinExistence type="inferred from homology"/>
<name>Y2298_DESOH</name>
<keyword id="KW-1185">Reference proteome</keyword>
<feature type="chain" id="PRO_1000091236" description="UPF0102 protein Dole_2298">
    <location>
        <begin position="1"/>
        <end position="123"/>
    </location>
</feature>
<sequence length="123" mass="13982">MLNQRQQYGRQGEQAAERFLKKEGYTIVCRNYRTPVGEIDIIAKDKTTLAFVEVKARRTESYGSPRLSITKDKQRKITRAALWYLKDTGQAGARARFDVVIVQGRDNSVELIRNAFDANLAAS</sequence>
<gene>
    <name type="ordered locus">Dole_2298</name>
</gene>
<dbReference type="EMBL" id="CP000859">
    <property type="protein sequence ID" value="ABW68102.1"/>
    <property type="molecule type" value="Genomic_DNA"/>
</dbReference>
<dbReference type="RefSeq" id="WP_012175714.1">
    <property type="nucleotide sequence ID" value="NC_009943.1"/>
</dbReference>
<dbReference type="SMR" id="A8ZV12"/>
<dbReference type="STRING" id="96561.Dole_2298"/>
<dbReference type="KEGG" id="dol:Dole_2298"/>
<dbReference type="eggNOG" id="COG0792">
    <property type="taxonomic scope" value="Bacteria"/>
</dbReference>
<dbReference type="HOGENOM" id="CLU_115353_2_1_7"/>
<dbReference type="OrthoDB" id="9794876at2"/>
<dbReference type="Proteomes" id="UP000008561">
    <property type="component" value="Chromosome"/>
</dbReference>
<dbReference type="GO" id="GO:0003676">
    <property type="term" value="F:nucleic acid binding"/>
    <property type="evidence" value="ECO:0007669"/>
    <property type="project" value="InterPro"/>
</dbReference>
<dbReference type="CDD" id="cd20736">
    <property type="entry name" value="PoNe_Nuclease"/>
    <property type="match status" value="1"/>
</dbReference>
<dbReference type="Gene3D" id="3.40.1350.10">
    <property type="match status" value="1"/>
</dbReference>
<dbReference type="HAMAP" id="MF_00048">
    <property type="entry name" value="UPF0102"/>
    <property type="match status" value="1"/>
</dbReference>
<dbReference type="InterPro" id="IPR011335">
    <property type="entry name" value="Restrct_endonuc-II-like"/>
</dbReference>
<dbReference type="InterPro" id="IPR011856">
    <property type="entry name" value="tRNA_endonuc-like_dom_sf"/>
</dbReference>
<dbReference type="InterPro" id="IPR003509">
    <property type="entry name" value="UPF0102_YraN-like"/>
</dbReference>
<dbReference type="NCBIfam" id="NF009150">
    <property type="entry name" value="PRK12497.1-3"/>
    <property type="match status" value="1"/>
</dbReference>
<dbReference type="NCBIfam" id="NF009154">
    <property type="entry name" value="PRK12497.3-3"/>
    <property type="match status" value="1"/>
</dbReference>
<dbReference type="NCBIfam" id="TIGR00252">
    <property type="entry name" value="YraN family protein"/>
    <property type="match status" value="1"/>
</dbReference>
<dbReference type="PANTHER" id="PTHR34039">
    <property type="entry name" value="UPF0102 PROTEIN YRAN"/>
    <property type="match status" value="1"/>
</dbReference>
<dbReference type="PANTHER" id="PTHR34039:SF1">
    <property type="entry name" value="UPF0102 PROTEIN YRAN"/>
    <property type="match status" value="1"/>
</dbReference>
<dbReference type="Pfam" id="PF02021">
    <property type="entry name" value="UPF0102"/>
    <property type="match status" value="1"/>
</dbReference>
<dbReference type="SUPFAM" id="SSF52980">
    <property type="entry name" value="Restriction endonuclease-like"/>
    <property type="match status" value="1"/>
</dbReference>
<evidence type="ECO:0000255" key="1">
    <source>
        <dbReference type="HAMAP-Rule" id="MF_00048"/>
    </source>
</evidence>
<protein>
    <recommendedName>
        <fullName evidence="1">UPF0102 protein Dole_2298</fullName>
    </recommendedName>
</protein>
<organism>
    <name type="scientific">Desulfosudis oleivorans (strain DSM 6200 / JCM 39069 / Hxd3)</name>
    <name type="common">Desulfococcus oleovorans</name>
    <dbReference type="NCBI Taxonomy" id="96561"/>
    <lineage>
        <taxon>Bacteria</taxon>
        <taxon>Pseudomonadati</taxon>
        <taxon>Thermodesulfobacteriota</taxon>
        <taxon>Desulfobacteria</taxon>
        <taxon>Desulfobacterales</taxon>
        <taxon>Desulfosudaceae</taxon>
        <taxon>Desulfosudis</taxon>
    </lineage>
</organism>
<comment type="similarity">
    <text evidence="1">Belongs to the UPF0102 family.</text>
</comment>